<gene>
    <name type="primary">dinB2</name>
    <name type="ordered locus">Atu5469</name>
    <name type="ORF">AGR_pAT_692</name>
</gene>
<dbReference type="EC" id="2.7.7.7"/>
<dbReference type="EMBL" id="AE007872">
    <property type="protein sequence ID" value="AAK90844.1"/>
    <property type="status" value="ALT_INIT"/>
    <property type="molecule type" value="Genomic_DNA"/>
</dbReference>
<dbReference type="PIR" id="AF3217">
    <property type="entry name" value="AF3217"/>
</dbReference>
<dbReference type="RefSeq" id="NP_396403.1">
    <property type="nucleotide sequence ID" value="NC_003064.2"/>
</dbReference>
<dbReference type="SMR" id="Q8UJK7"/>
<dbReference type="EnsemblBacteria" id="AAK90844">
    <property type="protein sequence ID" value="AAK90844"/>
    <property type="gene ID" value="Atu5469"/>
</dbReference>
<dbReference type="KEGG" id="atu:Atu5469"/>
<dbReference type="PATRIC" id="fig|176299.10.peg.5140"/>
<dbReference type="eggNOG" id="COG0389">
    <property type="taxonomic scope" value="Bacteria"/>
</dbReference>
<dbReference type="HOGENOM" id="CLU_012348_1_2_5"/>
<dbReference type="OrthoDB" id="9808813at2"/>
<dbReference type="PhylomeDB" id="Q8UJK7"/>
<dbReference type="Proteomes" id="UP000000813">
    <property type="component" value="Plasmid At"/>
</dbReference>
<dbReference type="GO" id="GO:0005829">
    <property type="term" value="C:cytosol"/>
    <property type="evidence" value="ECO:0007669"/>
    <property type="project" value="TreeGrafter"/>
</dbReference>
<dbReference type="GO" id="GO:0003684">
    <property type="term" value="F:damaged DNA binding"/>
    <property type="evidence" value="ECO:0007669"/>
    <property type="project" value="InterPro"/>
</dbReference>
<dbReference type="GO" id="GO:0003887">
    <property type="term" value="F:DNA-directed DNA polymerase activity"/>
    <property type="evidence" value="ECO:0007669"/>
    <property type="project" value="UniProtKB-UniRule"/>
</dbReference>
<dbReference type="GO" id="GO:0000287">
    <property type="term" value="F:magnesium ion binding"/>
    <property type="evidence" value="ECO:0007669"/>
    <property type="project" value="UniProtKB-UniRule"/>
</dbReference>
<dbReference type="GO" id="GO:0006261">
    <property type="term" value="P:DNA-templated DNA replication"/>
    <property type="evidence" value="ECO:0007669"/>
    <property type="project" value="UniProtKB-UniRule"/>
</dbReference>
<dbReference type="GO" id="GO:0042276">
    <property type="term" value="P:error-prone translesion synthesis"/>
    <property type="evidence" value="ECO:0007669"/>
    <property type="project" value="TreeGrafter"/>
</dbReference>
<dbReference type="GO" id="GO:0009432">
    <property type="term" value="P:SOS response"/>
    <property type="evidence" value="ECO:0007669"/>
    <property type="project" value="TreeGrafter"/>
</dbReference>
<dbReference type="CDD" id="cd03586">
    <property type="entry name" value="PolY_Pol_IV_kappa"/>
    <property type="match status" value="1"/>
</dbReference>
<dbReference type="FunFam" id="1.10.150.20:FF:000019">
    <property type="entry name" value="DNA polymerase IV"/>
    <property type="match status" value="1"/>
</dbReference>
<dbReference type="FunFam" id="3.30.1490.100:FF:000004">
    <property type="entry name" value="DNA polymerase IV"/>
    <property type="match status" value="1"/>
</dbReference>
<dbReference type="FunFam" id="3.40.1170.60:FF:000001">
    <property type="entry name" value="DNA polymerase IV"/>
    <property type="match status" value="1"/>
</dbReference>
<dbReference type="Gene3D" id="3.30.70.270">
    <property type="match status" value="1"/>
</dbReference>
<dbReference type="Gene3D" id="3.40.1170.60">
    <property type="match status" value="1"/>
</dbReference>
<dbReference type="Gene3D" id="1.10.150.20">
    <property type="entry name" value="5' to 3' exonuclease, C-terminal subdomain"/>
    <property type="match status" value="1"/>
</dbReference>
<dbReference type="Gene3D" id="3.30.1490.100">
    <property type="entry name" value="DNA polymerase, Y-family, little finger domain"/>
    <property type="match status" value="1"/>
</dbReference>
<dbReference type="HAMAP" id="MF_01113">
    <property type="entry name" value="DNApol_IV"/>
    <property type="match status" value="1"/>
</dbReference>
<dbReference type="InterPro" id="IPR043502">
    <property type="entry name" value="DNA/RNA_pol_sf"/>
</dbReference>
<dbReference type="InterPro" id="IPR036775">
    <property type="entry name" value="DNA_pol_Y-fam_lit_finger_sf"/>
</dbReference>
<dbReference type="InterPro" id="IPR017961">
    <property type="entry name" value="DNA_pol_Y-fam_little_finger"/>
</dbReference>
<dbReference type="InterPro" id="IPR050116">
    <property type="entry name" value="DNA_polymerase-Y"/>
</dbReference>
<dbReference type="InterPro" id="IPR022880">
    <property type="entry name" value="DNApol_IV"/>
</dbReference>
<dbReference type="InterPro" id="IPR053848">
    <property type="entry name" value="IMS_HHH_1"/>
</dbReference>
<dbReference type="InterPro" id="IPR043128">
    <property type="entry name" value="Rev_trsase/Diguanyl_cyclase"/>
</dbReference>
<dbReference type="InterPro" id="IPR001126">
    <property type="entry name" value="UmuC"/>
</dbReference>
<dbReference type="NCBIfam" id="NF002677">
    <property type="entry name" value="PRK02406.1"/>
    <property type="match status" value="1"/>
</dbReference>
<dbReference type="PANTHER" id="PTHR11076:SF33">
    <property type="entry name" value="DNA POLYMERASE KAPPA"/>
    <property type="match status" value="1"/>
</dbReference>
<dbReference type="PANTHER" id="PTHR11076">
    <property type="entry name" value="DNA REPAIR POLYMERASE UMUC / TRANSFERASE FAMILY MEMBER"/>
    <property type="match status" value="1"/>
</dbReference>
<dbReference type="Pfam" id="PF00817">
    <property type="entry name" value="IMS"/>
    <property type="match status" value="1"/>
</dbReference>
<dbReference type="Pfam" id="PF11799">
    <property type="entry name" value="IMS_C"/>
    <property type="match status" value="1"/>
</dbReference>
<dbReference type="Pfam" id="PF21999">
    <property type="entry name" value="IMS_HHH_1"/>
    <property type="match status" value="1"/>
</dbReference>
<dbReference type="SUPFAM" id="SSF56672">
    <property type="entry name" value="DNA/RNA polymerases"/>
    <property type="match status" value="1"/>
</dbReference>
<dbReference type="SUPFAM" id="SSF100879">
    <property type="entry name" value="Lesion bypass DNA polymerase (Y-family), little finger domain"/>
    <property type="match status" value="1"/>
</dbReference>
<dbReference type="PROSITE" id="PS50173">
    <property type="entry name" value="UMUC"/>
    <property type="match status" value="1"/>
</dbReference>
<feature type="chain" id="PRO_0000173901" description="DNA polymerase IV 2">
    <location>
        <begin position="1"/>
        <end position="357"/>
    </location>
</feature>
<feature type="domain" description="UmuC">
    <location>
        <begin position="4"/>
        <end position="184"/>
    </location>
</feature>
<feature type="active site" evidence="1">
    <location>
        <position position="103"/>
    </location>
</feature>
<feature type="binding site" evidence="1">
    <location>
        <position position="8"/>
    </location>
    <ligand>
        <name>Mg(2+)</name>
        <dbReference type="ChEBI" id="CHEBI:18420"/>
    </ligand>
</feature>
<feature type="binding site" evidence="1">
    <location>
        <position position="102"/>
    </location>
    <ligand>
        <name>Mg(2+)</name>
        <dbReference type="ChEBI" id="CHEBI:18420"/>
    </ligand>
</feature>
<feature type="site" description="Substrate discrimination" evidence="1">
    <location>
        <position position="13"/>
    </location>
</feature>
<organism>
    <name type="scientific">Agrobacterium fabrum (strain C58 / ATCC 33970)</name>
    <name type="common">Agrobacterium tumefaciens (strain C58)</name>
    <dbReference type="NCBI Taxonomy" id="176299"/>
    <lineage>
        <taxon>Bacteria</taxon>
        <taxon>Pseudomonadati</taxon>
        <taxon>Pseudomonadota</taxon>
        <taxon>Alphaproteobacteria</taxon>
        <taxon>Hyphomicrobiales</taxon>
        <taxon>Rhizobiaceae</taxon>
        <taxon>Rhizobium/Agrobacterium group</taxon>
        <taxon>Agrobacterium</taxon>
        <taxon>Agrobacterium tumefaciens complex</taxon>
    </lineage>
</organism>
<proteinExistence type="inferred from homology"/>
<comment type="function">
    <text evidence="1">Poorly processive, error-prone DNA polymerase involved in untargeted mutagenesis. Copies undamaged DNA at stalled replication forks, which arise in vivo from mismatched or misaligned primer ends. These misaligned primers can be extended by PolIV. Exhibits no 3'-5' exonuclease (proofreading) activity. May be involved in translesional synthesis, in conjunction with the beta clamp from PolIII (By similarity).</text>
</comment>
<comment type="catalytic activity">
    <reaction>
        <text>DNA(n) + a 2'-deoxyribonucleoside 5'-triphosphate = DNA(n+1) + diphosphate</text>
        <dbReference type="Rhea" id="RHEA:22508"/>
        <dbReference type="Rhea" id="RHEA-COMP:17339"/>
        <dbReference type="Rhea" id="RHEA-COMP:17340"/>
        <dbReference type="ChEBI" id="CHEBI:33019"/>
        <dbReference type="ChEBI" id="CHEBI:61560"/>
        <dbReference type="ChEBI" id="CHEBI:173112"/>
        <dbReference type="EC" id="2.7.7.7"/>
    </reaction>
</comment>
<comment type="cofactor">
    <cofactor evidence="1">
        <name>Mg(2+)</name>
        <dbReference type="ChEBI" id="CHEBI:18420"/>
    </cofactor>
    <text evidence="1">Binds 2 magnesium ions per subunit.</text>
</comment>
<comment type="subunit">
    <text evidence="1">Monomer.</text>
</comment>
<comment type="subcellular location">
    <subcellularLocation>
        <location evidence="1">Cytoplasm</location>
    </subcellularLocation>
</comment>
<comment type="similarity">
    <text evidence="2">Belongs to the DNA polymerase type-Y family.</text>
</comment>
<comment type="sequence caution" evidence="2">
    <conflict type="erroneous initiation">
        <sequence resource="EMBL-CDS" id="AAK90844"/>
    </conflict>
</comment>
<reference key="1">
    <citation type="journal article" date="2001" name="Science">
        <title>The genome of the natural genetic engineer Agrobacterium tumefaciens C58.</title>
        <authorList>
            <person name="Wood D.W."/>
            <person name="Setubal J.C."/>
            <person name="Kaul R."/>
            <person name="Monks D.E."/>
            <person name="Kitajima J.P."/>
            <person name="Okura V.K."/>
            <person name="Zhou Y."/>
            <person name="Chen L."/>
            <person name="Wood G.E."/>
            <person name="Almeida N.F. Jr."/>
            <person name="Woo L."/>
            <person name="Chen Y."/>
            <person name="Paulsen I.T."/>
            <person name="Eisen J.A."/>
            <person name="Karp P.D."/>
            <person name="Bovee D. Sr."/>
            <person name="Chapman P."/>
            <person name="Clendenning J."/>
            <person name="Deatherage G."/>
            <person name="Gillet W."/>
            <person name="Grant C."/>
            <person name="Kutyavin T."/>
            <person name="Levy R."/>
            <person name="Li M.-J."/>
            <person name="McClelland E."/>
            <person name="Palmieri A."/>
            <person name="Raymond C."/>
            <person name="Rouse G."/>
            <person name="Saenphimmachak C."/>
            <person name="Wu Z."/>
            <person name="Romero P."/>
            <person name="Gordon D."/>
            <person name="Zhang S."/>
            <person name="Yoo H."/>
            <person name="Tao Y."/>
            <person name="Biddle P."/>
            <person name="Jung M."/>
            <person name="Krespan W."/>
            <person name="Perry M."/>
            <person name="Gordon-Kamm B."/>
            <person name="Liao L."/>
            <person name="Kim S."/>
            <person name="Hendrick C."/>
            <person name="Zhao Z.-Y."/>
            <person name="Dolan M."/>
            <person name="Chumley F."/>
            <person name="Tingey S.V."/>
            <person name="Tomb J.-F."/>
            <person name="Gordon M.P."/>
            <person name="Olson M.V."/>
            <person name="Nester E.W."/>
        </authorList>
    </citation>
    <scope>NUCLEOTIDE SEQUENCE [LARGE SCALE GENOMIC DNA]</scope>
</reference>
<reference key="2">
    <citation type="journal article" date="2001" name="Science">
        <title>Genome sequence of the plant pathogen and biotechnology agent Agrobacterium tumefaciens C58.</title>
        <authorList>
            <person name="Goodner B."/>
            <person name="Hinkle G."/>
            <person name="Gattung S."/>
            <person name="Miller N."/>
            <person name="Blanchard M."/>
            <person name="Qurollo B."/>
            <person name="Goldman B.S."/>
            <person name="Cao Y."/>
            <person name="Askenazi M."/>
            <person name="Halling C."/>
            <person name="Mullin L."/>
            <person name="Houmiel K."/>
            <person name="Gordon J."/>
            <person name="Vaudin M."/>
            <person name="Iartchouk O."/>
            <person name="Epp A."/>
            <person name="Liu F."/>
            <person name="Wollam C."/>
            <person name="Allinger M."/>
            <person name="Doughty D."/>
            <person name="Scott C."/>
            <person name="Lappas C."/>
            <person name="Markelz B."/>
            <person name="Flanagan C."/>
            <person name="Crowell C."/>
            <person name="Gurson J."/>
            <person name="Lomo C."/>
            <person name="Sear C."/>
            <person name="Strub G."/>
            <person name="Cielo C."/>
            <person name="Slater S."/>
        </authorList>
    </citation>
    <scope>NUCLEOTIDE SEQUENCE [LARGE SCALE GENOMIC DNA]</scope>
    <source>
        <strain>C58 / ATCC 33970</strain>
    </source>
</reference>
<geneLocation type="plasmid">
    <name>AT</name>
</geneLocation>
<evidence type="ECO:0000250" key="1"/>
<evidence type="ECO:0000305" key="2"/>
<protein>
    <recommendedName>
        <fullName>DNA polymerase IV 2</fullName>
        <shortName>Pol IV 2</shortName>
        <ecNumber>2.7.7.7</ecNumber>
    </recommendedName>
</protein>
<sequence length="357" mass="39301">MRKIIHVDMDAFYASVEQRDNPELRGRPVAVGSAAARGVVAAASYEAREFGVRSAMPSVTAARRCPDLIFVPPRFDVYKAVSQQIRAIFAEYTRLIEPLSLDEAYLDVTENLKGMEIATEIASEIRERIKQITGLNASAGISYNKFLAKMASDLNKPNGQAVITPKNGPAFVEQLAVKKFHGVGPATAEKMHRFGIETGADLKSKSLQFLAEHFGKSGAYFYGIARGIDERQVRPDRIRKSVGAEDTFSVDINDLDLATAELRPLAEKVWHHCEAQRVSGKTVTVKVKYSDFTQATRSRTSALPVNGIQEILEAASALLATVYPFRRSVRLLGVTLSSLTNDQEAEDEEQPQLDLAL</sequence>
<keyword id="KW-0963">Cytoplasm</keyword>
<keyword id="KW-0227">DNA damage</keyword>
<keyword id="KW-0234">DNA repair</keyword>
<keyword id="KW-0235">DNA replication</keyword>
<keyword id="KW-0238">DNA-binding</keyword>
<keyword id="KW-0239">DNA-directed DNA polymerase</keyword>
<keyword id="KW-0460">Magnesium</keyword>
<keyword id="KW-0479">Metal-binding</keyword>
<keyword id="KW-0515">Mutator protein</keyword>
<keyword id="KW-0548">Nucleotidyltransferase</keyword>
<keyword id="KW-0614">Plasmid</keyword>
<keyword id="KW-1185">Reference proteome</keyword>
<keyword id="KW-0808">Transferase</keyword>
<accession>Q8UJK7</accession>
<name>DPO42_AGRFC</name>